<evidence type="ECO:0000255" key="1">
    <source>
        <dbReference type="PROSITE-ProRule" id="PRU10117"/>
    </source>
</evidence>
<evidence type="ECO:0000305" key="2"/>
<proteinExistence type="inferred from homology"/>
<sequence length="411" mass="46108">DSEFAELKIRGKIFKLPILKASIGEDVINISRVSAEADCFTYDPGFMSTASCQSTITYIDGDKGILRHRGYDIKDLAEKSDFLEVAYLLIYGELPSSEQYNNFTKQVAHHSLVNERLHYLFQTFCSSSHPMAIMLAAVGSLSAFYPDLLNCKEADYKLTAIRMIAKIPTIAAMSYKYSIGQPFIYPDNSLDFTENFLHMMFATPCTKYKVNPIIKNALNKIFILHADHEQNASTSTVRIAGSSGANPFACISTGIASLWGPAHGGANEAVINMLKEIGSSENIPKYIAKAKDKNDPFRLIGFGHRVYKNYDPRAAVLKETCKEVLKELGQLENNPLLQIAIELEAIALKDEYFIERKLYPNVDFYSGIIYKAMGIPSQMFTVLFAIARTIGWMAQWKEMHGDPEQKISRPR</sequence>
<name>CISY_RICHE</name>
<accession>Q59741</accession>
<organism>
    <name type="scientific">Rickettsia helvetica</name>
    <dbReference type="NCBI Taxonomy" id="35789"/>
    <lineage>
        <taxon>Bacteria</taxon>
        <taxon>Pseudomonadati</taxon>
        <taxon>Pseudomonadota</taxon>
        <taxon>Alphaproteobacteria</taxon>
        <taxon>Rickettsiales</taxon>
        <taxon>Rickettsiaceae</taxon>
        <taxon>Rickettsieae</taxon>
        <taxon>Rickettsia</taxon>
        <taxon>spotted fever group</taxon>
    </lineage>
</organism>
<dbReference type="EC" id="2.3.3.16"/>
<dbReference type="EMBL" id="U59723">
    <property type="protein sequence ID" value="AAB02959.1"/>
    <property type="molecule type" value="Genomic_DNA"/>
</dbReference>
<dbReference type="SMR" id="Q59741"/>
<dbReference type="UniPathway" id="UPA00223">
    <property type="reaction ID" value="UER00717"/>
</dbReference>
<dbReference type="GO" id="GO:0005737">
    <property type="term" value="C:cytoplasm"/>
    <property type="evidence" value="ECO:0007669"/>
    <property type="project" value="InterPro"/>
</dbReference>
<dbReference type="GO" id="GO:0004108">
    <property type="term" value="F:citrate (Si)-synthase activity"/>
    <property type="evidence" value="ECO:0007669"/>
    <property type="project" value="InterPro"/>
</dbReference>
<dbReference type="GO" id="GO:0006099">
    <property type="term" value="P:tricarboxylic acid cycle"/>
    <property type="evidence" value="ECO:0007669"/>
    <property type="project" value="UniProtKB-UniPathway"/>
</dbReference>
<dbReference type="CDD" id="cd06114">
    <property type="entry name" value="EcCS_like"/>
    <property type="match status" value="1"/>
</dbReference>
<dbReference type="FunFam" id="1.10.230.10:FF:000002">
    <property type="entry name" value="Citrate synthase"/>
    <property type="match status" value="1"/>
</dbReference>
<dbReference type="Gene3D" id="2.20.28.60">
    <property type="match status" value="1"/>
</dbReference>
<dbReference type="Gene3D" id="1.10.580.10">
    <property type="entry name" value="Citrate Synthase, domain 1"/>
    <property type="match status" value="1"/>
</dbReference>
<dbReference type="Gene3D" id="1.10.230.10">
    <property type="entry name" value="Cytochrome P450-Terp, domain 2"/>
    <property type="match status" value="1"/>
</dbReference>
<dbReference type="InterPro" id="IPR016142">
    <property type="entry name" value="Citrate_synth-like_lrg_a-sub"/>
</dbReference>
<dbReference type="InterPro" id="IPR016143">
    <property type="entry name" value="Citrate_synth-like_sm_a-sub"/>
</dbReference>
<dbReference type="InterPro" id="IPR002020">
    <property type="entry name" value="Citrate_synthase"/>
</dbReference>
<dbReference type="InterPro" id="IPR019810">
    <property type="entry name" value="Citrate_synthase_AS"/>
</dbReference>
<dbReference type="InterPro" id="IPR024176">
    <property type="entry name" value="Citrate_synthase_bac-typ"/>
</dbReference>
<dbReference type="InterPro" id="IPR036969">
    <property type="entry name" value="Citrate_synthase_sf"/>
</dbReference>
<dbReference type="InterPro" id="IPR010953">
    <property type="entry name" value="Citrate_synthase_typ-I"/>
</dbReference>
<dbReference type="NCBIfam" id="TIGR01798">
    <property type="entry name" value="cit_synth_I"/>
    <property type="match status" value="1"/>
</dbReference>
<dbReference type="NCBIfam" id="NF004126">
    <property type="entry name" value="PRK05614.1"/>
    <property type="match status" value="1"/>
</dbReference>
<dbReference type="PANTHER" id="PTHR42871">
    <property type="entry name" value="CITRATE SYNTHASE"/>
    <property type="match status" value="1"/>
</dbReference>
<dbReference type="PANTHER" id="PTHR42871:SF1">
    <property type="entry name" value="CITRATE SYNTHASE"/>
    <property type="match status" value="1"/>
</dbReference>
<dbReference type="Pfam" id="PF00285">
    <property type="entry name" value="Citrate_synt"/>
    <property type="match status" value="1"/>
</dbReference>
<dbReference type="PIRSF" id="PIRSF001369">
    <property type="entry name" value="Citrate_synth"/>
    <property type="match status" value="1"/>
</dbReference>
<dbReference type="PRINTS" id="PR00143">
    <property type="entry name" value="CITRTSNTHASE"/>
</dbReference>
<dbReference type="SUPFAM" id="SSF48256">
    <property type="entry name" value="Citrate synthase"/>
    <property type="match status" value="1"/>
</dbReference>
<dbReference type="PROSITE" id="PS00480">
    <property type="entry name" value="CITRATE_SYNTHASE"/>
    <property type="match status" value="1"/>
</dbReference>
<keyword id="KW-0808">Transferase</keyword>
<keyword id="KW-0816">Tricarboxylic acid cycle</keyword>
<protein>
    <recommendedName>
        <fullName>Citrate synthase</fullName>
        <ecNumber>2.3.3.16</ecNumber>
    </recommendedName>
</protein>
<comment type="catalytic activity">
    <reaction evidence="1">
        <text>oxaloacetate + acetyl-CoA + H2O = citrate + CoA + H(+)</text>
        <dbReference type="Rhea" id="RHEA:16845"/>
        <dbReference type="ChEBI" id="CHEBI:15377"/>
        <dbReference type="ChEBI" id="CHEBI:15378"/>
        <dbReference type="ChEBI" id="CHEBI:16452"/>
        <dbReference type="ChEBI" id="CHEBI:16947"/>
        <dbReference type="ChEBI" id="CHEBI:57287"/>
        <dbReference type="ChEBI" id="CHEBI:57288"/>
        <dbReference type="EC" id="2.3.3.16"/>
    </reaction>
</comment>
<comment type="pathway">
    <text>Carbohydrate metabolism; tricarboxylic acid cycle; isocitrate from oxaloacetate: step 1/2.</text>
</comment>
<comment type="miscellaneous">
    <text>Citrate synthase is found in nearly all cells capable of oxidative metabolism.</text>
</comment>
<comment type="similarity">
    <text evidence="2">Belongs to the citrate synthase family.</text>
</comment>
<reference key="1">
    <citation type="journal article" date="1997" name="Int. J. Syst. Bacteriol.">
        <title>Citrate synthase gene comparison, a new tool for phylogenetic analysis, and its application for the rickettsiae.</title>
        <authorList>
            <person name="Roux V."/>
            <person name="Rydkina E."/>
            <person name="Eremeeva M."/>
            <person name="Raoult D."/>
        </authorList>
    </citation>
    <scope>NUCLEOTIDE SEQUENCE [GENOMIC DNA]</scope>
    <source>
        <strain>C9P9</strain>
    </source>
</reference>
<feature type="chain" id="PRO_0000169963" description="Citrate synthase">
    <location>
        <begin position="1" status="less than"/>
        <end position="411" status="greater than"/>
    </location>
</feature>
<feature type="active site" evidence="1">
    <location>
        <position position="304"/>
    </location>
</feature>
<feature type="active site" evidence="1">
    <location>
        <position position="363"/>
    </location>
</feature>
<feature type="non-terminal residue">
    <location>
        <position position="1"/>
    </location>
</feature>
<feature type="non-terminal residue">
    <location>
        <position position="411"/>
    </location>
</feature>
<gene>
    <name type="primary">gltA</name>
</gene>